<feature type="chain" id="PRO_1000098339" description="Probable cytosol aminopeptidase">
    <location>
        <begin position="1"/>
        <end position="496"/>
    </location>
</feature>
<feature type="active site" evidence="1">
    <location>
        <position position="274"/>
    </location>
</feature>
<feature type="active site" evidence="1">
    <location>
        <position position="348"/>
    </location>
</feature>
<feature type="binding site" evidence="1">
    <location>
        <position position="262"/>
    </location>
    <ligand>
        <name>Mn(2+)</name>
        <dbReference type="ChEBI" id="CHEBI:29035"/>
        <label>2</label>
    </ligand>
</feature>
<feature type="binding site" evidence="1">
    <location>
        <position position="267"/>
    </location>
    <ligand>
        <name>Mn(2+)</name>
        <dbReference type="ChEBI" id="CHEBI:29035"/>
        <label>1</label>
    </ligand>
</feature>
<feature type="binding site" evidence="1">
    <location>
        <position position="267"/>
    </location>
    <ligand>
        <name>Mn(2+)</name>
        <dbReference type="ChEBI" id="CHEBI:29035"/>
        <label>2</label>
    </ligand>
</feature>
<feature type="binding site" evidence="1">
    <location>
        <position position="285"/>
    </location>
    <ligand>
        <name>Mn(2+)</name>
        <dbReference type="ChEBI" id="CHEBI:29035"/>
        <label>2</label>
    </ligand>
</feature>
<feature type="binding site" evidence="1">
    <location>
        <position position="344"/>
    </location>
    <ligand>
        <name>Mn(2+)</name>
        <dbReference type="ChEBI" id="CHEBI:29035"/>
        <label>1</label>
    </ligand>
</feature>
<feature type="binding site" evidence="1">
    <location>
        <position position="346"/>
    </location>
    <ligand>
        <name>Mn(2+)</name>
        <dbReference type="ChEBI" id="CHEBI:29035"/>
        <label>1</label>
    </ligand>
</feature>
<feature type="binding site" evidence="1">
    <location>
        <position position="346"/>
    </location>
    <ligand>
        <name>Mn(2+)</name>
        <dbReference type="ChEBI" id="CHEBI:29035"/>
        <label>2</label>
    </ligand>
</feature>
<dbReference type="EC" id="3.4.11.1" evidence="1"/>
<dbReference type="EC" id="3.4.11.10" evidence="1"/>
<dbReference type="EMBL" id="CP001074">
    <property type="protein sequence ID" value="ACE90502.1"/>
    <property type="molecule type" value="Genomic_DNA"/>
</dbReference>
<dbReference type="SMR" id="B3PUV3"/>
<dbReference type="KEGG" id="rec:RHECIAT_CH0001524"/>
<dbReference type="eggNOG" id="COG0260">
    <property type="taxonomic scope" value="Bacteria"/>
</dbReference>
<dbReference type="HOGENOM" id="CLU_013734_6_0_5"/>
<dbReference type="Proteomes" id="UP000008817">
    <property type="component" value="Chromosome"/>
</dbReference>
<dbReference type="GO" id="GO:0005737">
    <property type="term" value="C:cytoplasm"/>
    <property type="evidence" value="ECO:0007669"/>
    <property type="project" value="UniProtKB-SubCell"/>
</dbReference>
<dbReference type="GO" id="GO:0030145">
    <property type="term" value="F:manganese ion binding"/>
    <property type="evidence" value="ECO:0007669"/>
    <property type="project" value="UniProtKB-UniRule"/>
</dbReference>
<dbReference type="GO" id="GO:0070006">
    <property type="term" value="F:metalloaminopeptidase activity"/>
    <property type="evidence" value="ECO:0007669"/>
    <property type="project" value="InterPro"/>
</dbReference>
<dbReference type="GO" id="GO:0006508">
    <property type="term" value="P:proteolysis"/>
    <property type="evidence" value="ECO:0007669"/>
    <property type="project" value="UniProtKB-KW"/>
</dbReference>
<dbReference type="CDD" id="cd00433">
    <property type="entry name" value="Peptidase_M17"/>
    <property type="match status" value="1"/>
</dbReference>
<dbReference type="Gene3D" id="3.40.220.10">
    <property type="entry name" value="Leucine Aminopeptidase, subunit E, domain 1"/>
    <property type="match status" value="1"/>
</dbReference>
<dbReference type="Gene3D" id="3.40.630.10">
    <property type="entry name" value="Zn peptidases"/>
    <property type="match status" value="1"/>
</dbReference>
<dbReference type="HAMAP" id="MF_00181">
    <property type="entry name" value="Cytosol_peptidase_M17"/>
    <property type="match status" value="1"/>
</dbReference>
<dbReference type="InterPro" id="IPR011356">
    <property type="entry name" value="Leucine_aapep/pepB"/>
</dbReference>
<dbReference type="InterPro" id="IPR043472">
    <property type="entry name" value="Macro_dom-like"/>
</dbReference>
<dbReference type="InterPro" id="IPR000819">
    <property type="entry name" value="Peptidase_M17_C"/>
</dbReference>
<dbReference type="InterPro" id="IPR023042">
    <property type="entry name" value="Peptidase_M17_leu_NH2_pept"/>
</dbReference>
<dbReference type="InterPro" id="IPR008283">
    <property type="entry name" value="Peptidase_M17_N"/>
</dbReference>
<dbReference type="NCBIfam" id="NF002073">
    <property type="entry name" value="PRK00913.1-2"/>
    <property type="match status" value="1"/>
</dbReference>
<dbReference type="NCBIfam" id="NF002074">
    <property type="entry name" value="PRK00913.1-4"/>
    <property type="match status" value="1"/>
</dbReference>
<dbReference type="NCBIfam" id="NF002075">
    <property type="entry name" value="PRK00913.2-2"/>
    <property type="match status" value="1"/>
</dbReference>
<dbReference type="NCBIfam" id="NF002077">
    <property type="entry name" value="PRK00913.2-4"/>
    <property type="match status" value="1"/>
</dbReference>
<dbReference type="NCBIfam" id="NF002083">
    <property type="entry name" value="PRK00913.3-5"/>
    <property type="match status" value="1"/>
</dbReference>
<dbReference type="PANTHER" id="PTHR11963:SF23">
    <property type="entry name" value="CYTOSOL AMINOPEPTIDASE"/>
    <property type="match status" value="1"/>
</dbReference>
<dbReference type="PANTHER" id="PTHR11963">
    <property type="entry name" value="LEUCINE AMINOPEPTIDASE-RELATED"/>
    <property type="match status" value="1"/>
</dbReference>
<dbReference type="Pfam" id="PF00883">
    <property type="entry name" value="Peptidase_M17"/>
    <property type="match status" value="1"/>
</dbReference>
<dbReference type="Pfam" id="PF02789">
    <property type="entry name" value="Peptidase_M17_N"/>
    <property type="match status" value="1"/>
</dbReference>
<dbReference type="PRINTS" id="PR00481">
    <property type="entry name" value="LAMNOPPTDASE"/>
</dbReference>
<dbReference type="SUPFAM" id="SSF52949">
    <property type="entry name" value="Macro domain-like"/>
    <property type="match status" value="1"/>
</dbReference>
<dbReference type="SUPFAM" id="SSF53187">
    <property type="entry name" value="Zn-dependent exopeptidases"/>
    <property type="match status" value="1"/>
</dbReference>
<dbReference type="PROSITE" id="PS00631">
    <property type="entry name" value="CYTOSOL_AP"/>
    <property type="match status" value="1"/>
</dbReference>
<name>AMPA_RHIE6</name>
<gene>
    <name evidence="1" type="primary">pepA</name>
    <name type="ordered locus">RHECIAT_CH0001524</name>
</gene>
<sequence>MSAKFEISFSKSAKLNSGLAILLKTAEADAAAGAETADPAGVIAKAAKIARFSGKSMAALDIVAPEGAPVERIVVLGLGKAAELTAHDWLKAGGAAASKIKNTDRAAVFLDVPGLTTDARAAADFALGMLLRAYSFDSYKTKKNDDEEKPAKSVKVTIVTADASGAKKAFSDSEAIAGGVNLARDLVNEPPNALGPVEFAARAKELETLGVEVEILTEKEMRRLGMGALLGVAQGSVRPPRLAVMQWKGGRAKDRPIAFIGKGVVFDTGGISIKPAAGMEDMKGDMGGAAAVTGLMHVLASRKAAVNAIGIIGLVENMPDGNAQRPGDIVTSMSGQTIEVINTDAEGRLVLCDALWYCNDRFKPQFMINLATLTGAIVVALGNVHAGLFSNDDQLSARLTAAGLSTNEKLWRMPLGKDYDKLIDSKFADMKNTGGRQAGSITAAHFLKRFVQDTPWAHLDIAGTAMGSPQDEINQSWGSGFGVRLLDELVRAHYEA</sequence>
<accession>B3PUV3</accession>
<comment type="function">
    <text evidence="1">Presumably involved in the processing and regular turnover of intracellular proteins. Catalyzes the removal of unsubstituted N-terminal amino acids from various peptides.</text>
</comment>
<comment type="catalytic activity">
    <reaction evidence="1">
        <text>Release of an N-terminal amino acid, Xaa-|-Yaa-, in which Xaa is preferably Leu, but may be other amino acids including Pro although not Arg or Lys, and Yaa may be Pro. Amino acid amides and methyl esters are also readily hydrolyzed, but rates on arylamides are exceedingly low.</text>
        <dbReference type="EC" id="3.4.11.1"/>
    </reaction>
</comment>
<comment type="catalytic activity">
    <reaction evidence="1">
        <text>Release of an N-terminal amino acid, preferentially leucine, but not glutamic or aspartic acids.</text>
        <dbReference type="EC" id="3.4.11.10"/>
    </reaction>
</comment>
<comment type="cofactor">
    <cofactor evidence="1">
        <name>Mn(2+)</name>
        <dbReference type="ChEBI" id="CHEBI:29035"/>
    </cofactor>
    <text evidence="1">Binds 2 manganese ions per subunit.</text>
</comment>
<comment type="subcellular location">
    <subcellularLocation>
        <location evidence="1">Cytoplasm</location>
    </subcellularLocation>
</comment>
<comment type="similarity">
    <text evidence="1">Belongs to the peptidase M17 family.</text>
</comment>
<protein>
    <recommendedName>
        <fullName evidence="1">Probable cytosol aminopeptidase</fullName>
        <ecNumber evidence="1">3.4.11.1</ecNumber>
    </recommendedName>
    <alternativeName>
        <fullName evidence="1">Leucine aminopeptidase</fullName>
        <shortName evidence="1">LAP</shortName>
        <ecNumber evidence="1">3.4.11.10</ecNumber>
    </alternativeName>
    <alternativeName>
        <fullName evidence="1">Leucyl aminopeptidase</fullName>
    </alternativeName>
</protein>
<evidence type="ECO:0000255" key="1">
    <source>
        <dbReference type="HAMAP-Rule" id="MF_00181"/>
    </source>
</evidence>
<keyword id="KW-0031">Aminopeptidase</keyword>
<keyword id="KW-0963">Cytoplasm</keyword>
<keyword id="KW-0378">Hydrolase</keyword>
<keyword id="KW-0464">Manganese</keyword>
<keyword id="KW-0479">Metal-binding</keyword>
<keyword id="KW-0645">Protease</keyword>
<reference key="1">
    <citation type="journal article" date="2010" name="Appl. Environ. Microbiol.">
        <title>Conserved symbiotic plasmid DNA sequences in the multireplicon pangenomic structure of Rhizobium etli.</title>
        <authorList>
            <person name="Gonzalez V."/>
            <person name="Acosta J.L."/>
            <person name="Santamaria R.I."/>
            <person name="Bustos P."/>
            <person name="Fernandez J.L."/>
            <person name="Hernandez Gonzalez I.L."/>
            <person name="Diaz R."/>
            <person name="Flores M."/>
            <person name="Palacios R."/>
            <person name="Mora J."/>
            <person name="Davila G."/>
        </authorList>
    </citation>
    <scope>NUCLEOTIDE SEQUENCE [LARGE SCALE GENOMIC DNA]</scope>
    <source>
        <strain>CIAT 652</strain>
    </source>
</reference>
<proteinExistence type="inferred from homology"/>
<organism>
    <name type="scientific">Rhizobium etli (strain CIAT 652)</name>
    <dbReference type="NCBI Taxonomy" id="491916"/>
    <lineage>
        <taxon>Bacteria</taxon>
        <taxon>Pseudomonadati</taxon>
        <taxon>Pseudomonadota</taxon>
        <taxon>Alphaproteobacteria</taxon>
        <taxon>Hyphomicrobiales</taxon>
        <taxon>Rhizobiaceae</taxon>
        <taxon>Rhizobium/Agrobacterium group</taxon>
        <taxon>Rhizobium</taxon>
    </lineage>
</organism>